<name>CMBB_DICDI</name>
<feature type="chain" id="PRO_0000293626" description="Calmodulin-binding protein CmbB">
    <location>
        <begin position="1"/>
        <end position="413"/>
    </location>
</feature>
<feature type="repeat" description="FNIP 1" evidence="1">
    <location>
        <begin position="104"/>
        <end position="148"/>
    </location>
</feature>
<feature type="repeat" description="FNIP 2" evidence="1">
    <location>
        <begin position="149"/>
        <end position="192"/>
    </location>
</feature>
<feature type="repeat" description="FNIP 3" evidence="1">
    <location>
        <begin position="222"/>
        <end position="257"/>
    </location>
</feature>
<feature type="repeat" description="FNIP 4" evidence="1">
    <location>
        <begin position="258"/>
        <end position="301"/>
    </location>
</feature>
<feature type="repeat" description="FNIP 5" evidence="1">
    <location>
        <begin position="304"/>
        <end position="343"/>
    </location>
</feature>
<feature type="repeat" description="FNIP 6" evidence="1">
    <location>
        <begin position="344"/>
        <end position="386"/>
    </location>
</feature>
<feature type="sequence conflict" description="In Ref. 1; AAD56609." evidence="3" ref="1">
    <original>H</original>
    <variation>N</variation>
    <location>
        <position position="48"/>
    </location>
</feature>
<feature type="sequence conflict" description="In Ref. 1; AAD56609." evidence="3" ref="1">
    <original>NQ</original>
    <variation>K</variation>
    <location>
        <begin position="172"/>
        <end position="173"/>
    </location>
</feature>
<feature type="sequence conflict" description="In Ref. 1; AAD56609." evidence="3" ref="1">
    <original>QGACS</original>
    <variation>PRCLVP</variation>
    <location>
        <begin position="407"/>
        <end position="411"/>
    </location>
</feature>
<accession>Q54JC0</accession>
<accession>Q9U7C8</accession>
<organism>
    <name type="scientific">Dictyostelium discoideum</name>
    <name type="common">Social amoeba</name>
    <dbReference type="NCBI Taxonomy" id="44689"/>
    <lineage>
        <taxon>Eukaryota</taxon>
        <taxon>Amoebozoa</taxon>
        <taxon>Evosea</taxon>
        <taxon>Eumycetozoa</taxon>
        <taxon>Dictyostelia</taxon>
        <taxon>Dictyosteliales</taxon>
        <taxon>Dictyosteliaceae</taxon>
        <taxon>Dictyostelium</taxon>
    </lineage>
</organism>
<evidence type="ECO:0000255" key="1"/>
<evidence type="ECO:0000269" key="2">
    <source>
    </source>
</evidence>
<evidence type="ECO:0000305" key="3"/>
<evidence type="ECO:0000312" key="4">
    <source>
        <dbReference type="EMBL" id="AAD56609.1"/>
    </source>
</evidence>
<evidence type="ECO:0000312" key="5">
    <source>
        <dbReference type="EMBL" id="EAL63353.1"/>
    </source>
</evidence>
<keyword id="KW-0112">Calmodulin-binding</keyword>
<keyword id="KW-1185">Reference proteome</keyword>
<keyword id="KW-0677">Repeat</keyword>
<protein>
    <recommendedName>
        <fullName>Calmodulin-binding protein CmbB</fullName>
    </recommendedName>
    <alternativeName>
        <fullName>CaM-BP46</fullName>
    </alternativeName>
</protein>
<comment type="subunit">
    <text evidence="2">Interacts with calmodulin in the presence of Ca(2+).</text>
</comment>
<comment type="developmental stage">
    <text evidence="2">Expression levels peak at 4 hours of development after which they decrease steadily. Undetectable after 20 hours of development.</text>
</comment>
<reference evidence="3 4" key="1">
    <citation type="journal article" date="2006" name="Biochem. Biophys. Res. Commun.">
        <title>Isolation, characterization, and bioinformatic analysis of calmodulin-binding protein cmbB reveals a novel tandem IP22 repeat common to many Dictyostelium and Mimivirus proteins.</title>
        <authorList>
            <person name="O'Day D.H."/>
            <person name="Suhre K."/>
            <person name="Myre M.A."/>
            <person name="Chatterjee-Chakraborty M."/>
            <person name="Chavez S.E."/>
        </authorList>
    </citation>
    <scope>NUCLEOTIDE SEQUENCE [MRNA]</scope>
    <scope>INTERACTION WITH CALMODULIN</scope>
    <scope>DEVELOPMENTAL STAGE</scope>
    <source>
        <strain evidence="2">AX3</strain>
    </source>
</reference>
<reference evidence="3 5" key="2">
    <citation type="journal article" date="2005" name="Nature">
        <title>The genome of the social amoeba Dictyostelium discoideum.</title>
        <authorList>
            <person name="Eichinger L."/>
            <person name="Pachebat J.A."/>
            <person name="Gloeckner G."/>
            <person name="Rajandream M.A."/>
            <person name="Sucgang R."/>
            <person name="Berriman M."/>
            <person name="Song J."/>
            <person name="Olsen R."/>
            <person name="Szafranski K."/>
            <person name="Xu Q."/>
            <person name="Tunggal B."/>
            <person name="Kummerfeld S."/>
            <person name="Madera M."/>
            <person name="Konfortov B.A."/>
            <person name="Rivero F."/>
            <person name="Bankier A.T."/>
            <person name="Lehmann R."/>
            <person name="Hamlin N."/>
            <person name="Davies R."/>
            <person name="Gaudet P."/>
            <person name="Fey P."/>
            <person name="Pilcher K."/>
            <person name="Chen G."/>
            <person name="Saunders D."/>
            <person name="Sodergren E.J."/>
            <person name="Davis P."/>
            <person name="Kerhornou A."/>
            <person name="Nie X."/>
            <person name="Hall N."/>
            <person name="Anjard C."/>
            <person name="Hemphill L."/>
            <person name="Bason N."/>
            <person name="Farbrother P."/>
            <person name="Desany B."/>
            <person name="Just E."/>
            <person name="Morio T."/>
            <person name="Rost R."/>
            <person name="Churcher C.M."/>
            <person name="Cooper J."/>
            <person name="Haydock S."/>
            <person name="van Driessche N."/>
            <person name="Cronin A."/>
            <person name="Goodhead I."/>
            <person name="Muzny D.M."/>
            <person name="Mourier T."/>
            <person name="Pain A."/>
            <person name="Lu M."/>
            <person name="Harper D."/>
            <person name="Lindsay R."/>
            <person name="Hauser H."/>
            <person name="James K.D."/>
            <person name="Quiles M."/>
            <person name="Madan Babu M."/>
            <person name="Saito T."/>
            <person name="Buchrieser C."/>
            <person name="Wardroper A."/>
            <person name="Felder M."/>
            <person name="Thangavelu M."/>
            <person name="Johnson D."/>
            <person name="Knights A."/>
            <person name="Loulseged H."/>
            <person name="Mungall K.L."/>
            <person name="Oliver K."/>
            <person name="Price C."/>
            <person name="Quail M.A."/>
            <person name="Urushihara H."/>
            <person name="Hernandez J."/>
            <person name="Rabbinowitsch E."/>
            <person name="Steffen D."/>
            <person name="Sanders M."/>
            <person name="Ma J."/>
            <person name="Kohara Y."/>
            <person name="Sharp S."/>
            <person name="Simmonds M.N."/>
            <person name="Spiegler S."/>
            <person name="Tivey A."/>
            <person name="Sugano S."/>
            <person name="White B."/>
            <person name="Walker D."/>
            <person name="Woodward J.R."/>
            <person name="Winckler T."/>
            <person name="Tanaka Y."/>
            <person name="Shaulsky G."/>
            <person name="Schleicher M."/>
            <person name="Weinstock G.M."/>
            <person name="Rosenthal A."/>
            <person name="Cox E.C."/>
            <person name="Chisholm R.L."/>
            <person name="Gibbs R.A."/>
            <person name="Loomis W.F."/>
            <person name="Platzer M."/>
            <person name="Kay R.R."/>
            <person name="Williams J.G."/>
            <person name="Dear P.H."/>
            <person name="Noegel A.A."/>
            <person name="Barrell B.G."/>
            <person name="Kuspa A."/>
        </authorList>
    </citation>
    <scope>NUCLEOTIDE SEQUENCE [LARGE SCALE GENOMIC DNA]</scope>
    <source>
        <strain evidence="5">AX4</strain>
    </source>
</reference>
<dbReference type="EMBL" id="AF140043">
    <property type="protein sequence ID" value="AAD56609.1"/>
    <property type="molecule type" value="mRNA"/>
</dbReference>
<dbReference type="EMBL" id="AAFI02000109">
    <property type="protein sequence ID" value="EAL63353.1"/>
    <property type="molecule type" value="Genomic_DNA"/>
</dbReference>
<dbReference type="RefSeq" id="XP_636873.1">
    <property type="nucleotide sequence ID" value="XM_631781.1"/>
</dbReference>
<dbReference type="SMR" id="Q54JC0"/>
<dbReference type="FunCoup" id="Q54JC0">
    <property type="interactions" value="640"/>
</dbReference>
<dbReference type="STRING" id="44689.Q54JC0"/>
<dbReference type="PaxDb" id="44689-DDB0201645"/>
<dbReference type="EnsemblProtists" id="EAL63353">
    <property type="protein sequence ID" value="EAL63353"/>
    <property type="gene ID" value="DDB_G0288131"/>
</dbReference>
<dbReference type="GeneID" id="8626485"/>
<dbReference type="KEGG" id="ddi:DDB_G0288131"/>
<dbReference type="dictyBase" id="DDB_G0288131">
    <property type="gene designation" value="cmbB"/>
</dbReference>
<dbReference type="VEuPathDB" id="AmoebaDB:DDB_G0288131"/>
<dbReference type="eggNOG" id="ENOG502RE30">
    <property type="taxonomic scope" value="Eukaryota"/>
</dbReference>
<dbReference type="HOGENOM" id="CLU_029080_1_0_1"/>
<dbReference type="InParanoid" id="Q54JC0"/>
<dbReference type="OMA" id="IVEYHWR"/>
<dbReference type="PhylomeDB" id="Q54JC0"/>
<dbReference type="PRO" id="PR:Q54JC0"/>
<dbReference type="Proteomes" id="UP000002195">
    <property type="component" value="Chromosome 5"/>
</dbReference>
<dbReference type="GO" id="GO:0005516">
    <property type="term" value="F:calmodulin binding"/>
    <property type="evidence" value="ECO:0000314"/>
    <property type="project" value="dictyBase"/>
</dbReference>
<dbReference type="Gene3D" id="3.80.10.10">
    <property type="entry name" value="Ribonuclease Inhibitor"/>
    <property type="match status" value="1"/>
</dbReference>
<dbReference type="InterPro" id="IPR008615">
    <property type="entry name" value="FNIP"/>
</dbReference>
<dbReference type="InterPro" id="IPR032675">
    <property type="entry name" value="LRR_dom_sf"/>
</dbReference>
<dbReference type="InterPro" id="IPR051251">
    <property type="entry name" value="STK_FNIP-Repeat"/>
</dbReference>
<dbReference type="PANTHER" id="PTHR32134">
    <property type="entry name" value="FNIP REPEAT-CONTAINING PROTEIN"/>
    <property type="match status" value="1"/>
</dbReference>
<dbReference type="PANTHER" id="PTHR32134:SF173">
    <property type="entry name" value="FNIP REPEAT-CONTAINING PROTEIN-RELATED"/>
    <property type="match status" value="1"/>
</dbReference>
<dbReference type="Pfam" id="PF05725">
    <property type="entry name" value="FNIP"/>
    <property type="match status" value="6"/>
</dbReference>
<dbReference type="SUPFAM" id="SSF52058">
    <property type="entry name" value="L domain-like"/>
    <property type="match status" value="1"/>
</dbReference>
<proteinExistence type="evidence at protein level"/>
<sequence>MTSNHLPHHNLTDEDQQEYNKIFKEFIFNIPHNMNPFSPQLDEKKNSHIVEYHWRSPSNTIPSTCNTLYVCFNSPIPVNVIPNNVIILCFLCENKTGFTKGPDFNHPIHPGTIPMSVRYIYFINATYNKPLIAHALPPSAEYLFLSDCYNQAFRAGDLPPNLNILETGDEYNQPFDPLVIPKSLRSLFLGKGYNQPLEFGGLTSLTCLVYDEGSISELPIISLPPNLEFLLLSDAFNHPIEAGMLPPKLKTLTFGDGFNQPLAVGTLPPSLENINFGKVFDQPFLPNVLPHHLKSISFHQFSYFSQTFENIPSHVQTVEFGYTYNKPITSLPSHLKYIKFSEKYNHPIDGVLPQSLTHCYLGKSFKRPLVPGIFPPGLKVLILNGYPKKIPPGTVPANCNFQKNPKQGACSVM</sequence>
<gene>
    <name evidence="5" type="primary">cmbB</name>
    <name type="ORF">DDB_G0288131</name>
</gene>